<name>CARL2_MOUSE</name>
<feature type="chain" id="PRO_0000326239" description="Capping protein, Arp2/3 and myosin-I linker protein 2">
    <location>
        <begin position="1"/>
        <end position="1296"/>
    </location>
</feature>
<feature type="repeat" description="LRR 1">
    <location>
        <begin position="63"/>
        <end position="87"/>
    </location>
</feature>
<feature type="repeat" description="LRR 2">
    <location>
        <begin position="88"/>
        <end position="110"/>
    </location>
</feature>
<feature type="repeat" description="LRR 3">
    <location>
        <begin position="248"/>
        <end position="271"/>
    </location>
</feature>
<feature type="repeat" description="LRR 4">
    <location>
        <begin position="273"/>
        <end position="296"/>
    </location>
</feature>
<feature type="repeat" description="LRR 5">
    <location>
        <begin position="305"/>
        <end position="328"/>
    </location>
</feature>
<feature type="repeat" description="LRR 6">
    <location>
        <begin position="363"/>
        <end position="386"/>
    </location>
</feature>
<feature type="repeat" description="LRR 7">
    <location>
        <begin position="395"/>
        <end position="415"/>
    </location>
</feature>
<feature type="repeat" description="LRR 8">
    <location>
        <begin position="426"/>
        <end position="448"/>
    </location>
</feature>
<feature type="repeat" description="LRR 9">
    <location>
        <begin position="453"/>
        <end position="477"/>
    </location>
</feature>
<feature type="repeat" description="LRR 10">
    <location>
        <begin position="480"/>
        <end position="506"/>
    </location>
</feature>
<feature type="repeat" description="LRR 11">
    <location>
        <begin position="515"/>
        <end position="538"/>
    </location>
</feature>
<feature type="repeat" description="LRR 12">
    <location>
        <begin position="542"/>
        <end position="565"/>
    </location>
</feature>
<feature type="repeat" description="LRR 13">
    <location>
        <begin position="570"/>
        <end position="594"/>
    </location>
</feature>
<feature type="repeat" description="LRR 14">
    <location>
        <begin position="598"/>
        <end position="621"/>
    </location>
</feature>
<feature type="repeat" description="LRR 15">
    <location>
        <begin position="836"/>
        <end position="859"/>
    </location>
</feature>
<feature type="region of interest" description="Tropomodulin-like">
    <location>
        <begin position="507"/>
        <end position="601"/>
    </location>
</feature>
<feature type="region of interest" description="Necessary for localization at the cell membrane" evidence="1">
    <location>
        <begin position="975"/>
        <end position="1002"/>
    </location>
</feature>
<feature type="region of interest" description="Disordered" evidence="2">
    <location>
        <begin position="988"/>
        <end position="1296"/>
    </location>
</feature>
<feature type="compositionally biased region" description="Basic and acidic residues" evidence="2">
    <location>
        <begin position="1079"/>
        <end position="1091"/>
    </location>
</feature>
<feature type="compositionally biased region" description="Basic and acidic residues" evidence="2">
    <location>
        <begin position="1118"/>
        <end position="1134"/>
    </location>
</feature>
<feature type="compositionally biased region" description="Polar residues" evidence="2">
    <location>
        <begin position="1176"/>
        <end position="1185"/>
    </location>
</feature>
<feature type="compositionally biased region" description="Pro residues" evidence="2">
    <location>
        <begin position="1199"/>
        <end position="1209"/>
    </location>
</feature>
<feature type="compositionally biased region" description="Pro residues" evidence="2">
    <location>
        <begin position="1267"/>
        <end position="1285"/>
    </location>
</feature>
<feature type="modified residue" description="Phosphoserine" evidence="7">
    <location>
        <position position="1008"/>
    </location>
</feature>
<feature type="modified residue" description="Phosphoserine" evidence="7">
    <location>
        <position position="1134"/>
    </location>
</feature>
<feature type="modified residue" description="Phosphothreonine" evidence="7">
    <location>
        <position position="1145"/>
    </location>
</feature>
<feature type="modified residue" description="Omega-N-methylarginine" evidence="8">
    <location>
        <position position="1191"/>
    </location>
</feature>
<feature type="modified residue" description="Phosphoserine" evidence="7">
    <location>
        <position position="1203"/>
    </location>
</feature>
<feature type="modified residue" description="Phosphoserine" evidence="7">
    <location>
        <position position="1281"/>
    </location>
</feature>
<feature type="splice variant" id="VSP_032634" description="In isoform 2." evidence="4">
    <location>
        <begin position="1"/>
        <end position="603"/>
    </location>
</feature>
<feature type="splice variant" id="VSP_032635" description="In isoform 2." evidence="4">
    <original>VLLRKRNGTPSWQLRGKMQSRRLGRLHAVAEKHWAAGPRDTPASAVYQRVDVCVGW</original>
    <variation>DESSSWKWLEPSNCFHLVSSLHGAAEEAERDPELAAPGEDAEPQAGPSARGSPSPAAPGPPAGPLPRMDLPPAGQPLRHPTRARPRPRRQHHHRPPPGGPQ</variation>
    <location>
        <begin position="873"/>
        <end position="928"/>
    </location>
</feature>
<comment type="function">
    <text evidence="1 3">Cell membrane-cytoskeleton-associated protein that plays a role in the regulation of actin polymerization at the barbed end of actin filaments. Prevents F-actin heterodimeric capping protein (CP) activity at the leading edges of migrating cells, and hence generates uncapped barbed ends and enhances actin polymerization. Plays a role in cell protrusion formations; involved in cell polarity, lamellipodial assembly, membrane ruffling and macropinosome formations. Involved as well in cell migration and invadopodia formation during wound healing (By similarity). Required for CD28-mediated stimulation of NF-kappa-B signaling, involved in naive T cells activation, maturation into T memory cells, and differentiation into T helper cells (PubMed:27647348). Required for CD28-mediated differentiation of T regulatory cells (By similarity).</text>
</comment>
<comment type="subunit">
    <text evidence="1">Forms homodimers. Interacts (via C-terminus) with heterodimeric capping protein (CP); the interaction inhibits CP activity and hence promotes actin polymerization at the barbed end of actin filaments.</text>
</comment>
<comment type="subcellular location">
    <subcellularLocation>
        <location evidence="1">Cytoplasm</location>
    </subcellularLocation>
    <subcellularLocation>
        <location evidence="1">Cytoplasm</location>
        <location evidence="1">Cytoskeleton</location>
    </subcellularLocation>
    <subcellularLocation>
        <location evidence="1">Cell membrane</location>
        <topology evidence="1">Peripheral membrane protein</topology>
        <orientation evidence="1">Cytoplasmic side</orientation>
    </subcellularLocation>
    <subcellularLocation>
        <location evidence="1">Cell projection</location>
        <location evidence="1">Lamellipodium</location>
    </subcellularLocation>
    <subcellularLocation>
        <location evidence="1">Cell projection</location>
        <location evidence="1">Ruffle</location>
    </subcellularLocation>
    <text evidence="1">Colocalizes to dynamic vimentin filaments both in the central cytoplasm and at leading edges of migrating cells. Colocalizes with F-actin, Arp2/3 complex and cortactin to leading edge lamellipodia, ruffles and macropinosomes of migrating cells.</text>
</comment>
<comment type="alternative products">
    <event type="alternative splicing"/>
    <isoform>
        <id>Q3V3V9-1</id>
        <name>1</name>
        <sequence type="displayed"/>
    </isoform>
    <isoform>
        <id>Q3V3V9-2</id>
        <name>2</name>
        <sequence type="described" ref="VSP_032634 VSP_032635"/>
    </isoform>
</comment>
<comment type="domain">
    <text evidence="1">The N-terminal leucine-rich repeat (LRR) domain is necessary for localization to vimentin filaments. The C-terminus is necessary for localization to the cell membrane.</text>
</comment>
<comment type="similarity">
    <text evidence="5">Belongs to the CARMIL family.</text>
</comment>
<sequence length="1296" mass="141372">MAQTPDDISCELRGEITRFLWPKEAELLLKTWLPQEGAEQSHILALLRWRAYLLHTCLPLRVDCTFSYLEVQAMALQETPPRVTFELESLPELVLEFPCVAALEQLAQHVAAAIKKVFPRSTLGKLFRKPTPSSLLARLERSHPLESTIPSSPCGGFLETYEALCDYNGFPFREEIQWDVDTIYHRQGCRHFCLGDFSHFGSRDLALSVAALSYNLWFRRLSCEDMKLSLEVSEQILHMTSQSSYLEELVLEACGLRGDFVRRLAQALAGHFNSGLRELSLSGNLLDDRGMRALGRALATNATFDSTLTHLDLSGNPGALGPSQDSGGLYTFLSRPNVLAYLNLAGTDATLGTLFTALAGGCCSSLTHLEASRNIFSRMKSQAAPAALQRFLGGTRMLRHLGLAGCKLPPEALRALLEGLALNTQIHDLHLDLSACELRSVGAQVIQDLVCDAGALSSLDLSDNGFGSDMVTLVLAIGRSRSLKHVALGRNFNVRCKETLDDVLHRIAQLMQDDDCPLQSLSVAESRLKQGASILIRALGTNPKLTALDISGNAIGDAGAKMLAKALRVNTRLRSVIWDRNNTSALGLLDVAQALEQNHSLKSMPLPLNDVTQAHRSRPELTTRAVHQIQACLWRNNQVDSTSDLKPCLQPLGLISDHSEQEVNELCQSVQEHMELLGCGAGPQGEVAVHQAEDAIQNANFSLSILPILYEAGRSPSHHWQLQQKLESLLGQVGEICRQDIQDFTQTTLDTTRSLCPQMLQTPGWRKQLEGVLVGSGGLPELLPEHLLQDAFSRLRDMRLSITGTLAESIVAQALAGLHAARDRLVERLTQQAPVTMAPAVPPLGGNELSPLETGGLEELFFPTEKEEEREKVLLRKRNGTPSWQLRGKMQSRRLGRLHAVAEKHWAAGPRDTPASAVYQRVDVCVGWVPPALLQEGNGLTARVDEGVEEFFSKRLIQQDHFWAPEEDPATEGGATPVPRTLRKKLGTLFAFKKPRSTRGPRPDLETSPGAAARARKSTLGDLLRPPARPGRGEEPGGAEGGTSSPDPARRNRPRYTRESKAYSMILLPAEEEAAVGTRPDKRRPLERGDTELAPSFEQRVQVMLQRIGVSRASGGAESKRKQSKDGEIKKAGSDGDIMDSSTETPPISIKSRTHSVSADPSCRPGPGGQGPESATWKTLGQQLNAELRGRGWGQQDGPGPPSPCPSPSPRRTSPAPDILSLPEDPCLGPRNEERPLRLQRSPVLKRRPKLEAPPSPSLGSGLGSKPLPPYPTEPSSPERSPPSPATDQRGGGPNP</sequence>
<dbReference type="EMBL" id="AK031012">
    <property type="protein sequence ID" value="BAE20471.1"/>
    <property type="molecule type" value="mRNA"/>
</dbReference>
<dbReference type="EMBL" id="AC152826">
    <property type="status" value="NOT_ANNOTATED_CDS"/>
    <property type="molecule type" value="Genomic_DNA"/>
</dbReference>
<dbReference type="RefSeq" id="NP_001028492.1">
    <property type="nucleotide sequence ID" value="NM_001033320.2"/>
</dbReference>
<dbReference type="SMR" id="Q3V3V9"/>
<dbReference type="BioGRID" id="231561">
    <property type="interactions" value="5"/>
</dbReference>
<dbReference type="FunCoup" id="Q3V3V9">
    <property type="interactions" value="152"/>
</dbReference>
<dbReference type="IntAct" id="Q3V3V9">
    <property type="interactions" value="20"/>
</dbReference>
<dbReference type="STRING" id="10090.ENSMUSP00000148422"/>
<dbReference type="GlyGen" id="Q3V3V9">
    <property type="glycosylation" value="1 site"/>
</dbReference>
<dbReference type="iPTMnet" id="Q3V3V9"/>
<dbReference type="PhosphoSitePlus" id="Q3V3V9"/>
<dbReference type="jPOST" id="Q3V3V9"/>
<dbReference type="PeptideAtlas" id="Q3V3V9"/>
<dbReference type="ProteomicsDB" id="265546">
    <molecule id="Q3V3V9-1"/>
</dbReference>
<dbReference type="ProteomicsDB" id="265547">
    <molecule id="Q3V3V9-2"/>
</dbReference>
<dbReference type="UCSC" id="uc009ndo.1">
    <molecule id="Q3V3V9-2"/>
    <property type="organism name" value="mouse"/>
</dbReference>
<dbReference type="AGR" id="MGI:2685431"/>
<dbReference type="MGI" id="MGI:2685431">
    <property type="gene designation" value="Carmil2"/>
</dbReference>
<dbReference type="HOGENOM" id="CLU_375944_0_0_1"/>
<dbReference type="InParanoid" id="Q3V3V9"/>
<dbReference type="PhylomeDB" id="Q3V3V9"/>
<dbReference type="TreeFam" id="TF316381"/>
<dbReference type="BioGRID-ORCS" id="234695">
    <property type="hits" value="3 hits in 79 CRISPR screens"/>
</dbReference>
<dbReference type="ChiTaRS" id="Rltpr">
    <property type="organism name" value="mouse"/>
</dbReference>
<dbReference type="PRO" id="PR:Q3V3V9"/>
<dbReference type="Proteomes" id="UP000000589">
    <property type="component" value="Unplaced"/>
</dbReference>
<dbReference type="RNAct" id="Q3V3V9">
    <property type="molecule type" value="protein"/>
</dbReference>
<dbReference type="GO" id="GO:0031252">
    <property type="term" value="C:cell leading edge"/>
    <property type="evidence" value="ECO:0000250"/>
    <property type="project" value="UniProtKB"/>
</dbReference>
<dbReference type="GO" id="GO:0005911">
    <property type="term" value="C:cell-cell junction"/>
    <property type="evidence" value="ECO:0000314"/>
    <property type="project" value="MGI"/>
</dbReference>
<dbReference type="GO" id="GO:0005737">
    <property type="term" value="C:cytoplasm"/>
    <property type="evidence" value="ECO:0000314"/>
    <property type="project" value="MGI"/>
</dbReference>
<dbReference type="GO" id="GO:0008290">
    <property type="term" value="C:F-actin capping protein complex"/>
    <property type="evidence" value="ECO:0000314"/>
    <property type="project" value="MGI"/>
</dbReference>
<dbReference type="GO" id="GO:0001772">
    <property type="term" value="C:immunological synapse"/>
    <property type="evidence" value="ECO:0000314"/>
    <property type="project" value="MGI"/>
</dbReference>
<dbReference type="GO" id="GO:0045111">
    <property type="term" value="C:intermediate filament cytoskeleton"/>
    <property type="evidence" value="ECO:0000250"/>
    <property type="project" value="UniProtKB"/>
</dbReference>
<dbReference type="GO" id="GO:0030027">
    <property type="term" value="C:lamellipodium"/>
    <property type="evidence" value="ECO:0000250"/>
    <property type="project" value="UniProtKB"/>
</dbReference>
<dbReference type="GO" id="GO:0044354">
    <property type="term" value="C:macropinosome"/>
    <property type="evidence" value="ECO:0000250"/>
    <property type="project" value="UniProtKB"/>
</dbReference>
<dbReference type="GO" id="GO:0001726">
    <property type="term" value="C:ruffle"/>
    <property type="evidence" value="ECO:0000250"/>
    <property type="project" value="UniProtKB"/>
</dbReference>
<dbReference type="GO" id="GO:0005543">
    <property type="term" value="F:phospholipid binding"/>
    <property type="evidence" value="ECO:0000250"/>
    <property type="project" value="UniProtKB"/>
</dbReference>
<dbReference type="GO" id="GO:0044877">
    <property type="term" value="F:protein-containing complex binding"/>
    <property type="evidence" value="ECO:0000250"/>
    <property type="project" value="UniProtKB"/>
</dbReference>
<dbReference type="GO" id="GO:0051639">
    <property type="term" value="P:actin filament network formation"/>
    <property type="evidence" value="ECO:0000250"/>
    <property type="project" value="UniProtKB"/>
</dbReference>
<dbReference type="GO" id="GO:0045184">
    <property type="term" value="P:establishment of protein localization"/>
    <property type="evidence" value="ECO:0000315"/>
    <property type="project" value="MGI"/>
</dbReference>
<dbReference type="GO" id="GO:0007163">
    <property type="term" value="P:establishment or maintenance of cell polarity"/>
    <property type="evidence" value="ECO:0000250"/>
    <property type="project" value="UniProtKB"/>
</dbReference>
<dbReference type="GO" id="GO:0061339">
    <property type="term" value="P:establishment or maintenance of monopolar cell polarity"/>
    <property type="evidence" value="ECO:0000250"/>
    <property type="project" value="UniProtKB"/>
</dbReference>
<dbReference type="GO" id="GO:0048872">
    <property type="term" value="P:homeostasis of number of cells"/>
    <property type="evidence" value="ECO:0000315"/>
    <property type="project" value="MGI"/>
</dbReference>
<dbReference type="GO" id="GO:2000813">
    <property type="term" value="P:negative regulation of barbed-end actin filament capping"/>
    <property type="evidence" value="ECO:0000250"/>
    <property type="project" value="UniProtKB"/>
</dbReference>
<dbReference type="GO" id="GO:0030335">
    <property type="term" value="P:positive regulation of cell migration"/>
    <property type="evidence" value="ECO:0000250"/>
    <property type="project" value="UniProtKB"/>
</dbReference>
<dbReference type="GO" id="GO:0090091">
    <property type="term" value="P:positive regulation of extracellular matrix disassembly"/>
    <property type="evidence" value="ECO:0000250"/>
    <property type="project" value="UniProtKB"/>
</dbReference>
<dbReference type="GO" id="GO:0032743">
    <property type="term" value="P:positive regulation of interleukin-2 production"/>
    <property type="evidence" value="ECO:0000315"/>
    <property type="project" value="MGI"/>
</dbReference>
<dbReference type="GO" id="GO:0010592">
    <property type="term" value="P:positive regulation of lamellipodium assembly"/>
    <property type="evidence" value="ECO:0000250"/>
    <property type="project" value="UniProtKB"/>
</dbReference>
<dbReference type="GO" id="GO:1902745">
    <property type="term" value="P:positive regulation of lamellipodium organization"/>
    <property type="evidence" value="ECO:0000250"/>
    <property type="project" value="UniProtKB"/>
</dbReference>
<dbReference type="GO" id="GO:0045591">
    <property type="term" value="P:positive regulation of regulatory T cell differentiation"/>
    <property type="evidence" value="ECO:0000315"/>
    <property type="project" value="MGI"/>
</dbReference>
<dbReference type="GO" id="GO:1900029">
    <property type="term" value="P:positive regulation of ruffle assembly"/>
    <property type="evidence" value="ECO:0000250"/>
    <property type="project" value="UniProtKB"/>
</dbReference>
<dbReference type="GO" id="GO:0042102">
    <property type="term" value="P:positive regulation of T cell proliferation"/>
    <property type="evidence" value="ECO:0000315"/>
    <property type="project" value="MGI"/>
</dbReference>
<dbReference type="GO" id="GO:0032729">
    <property type="term" value="P:positive regulation of type II interferon production"/>
    <property type="evidence" value="ECO:0000315"/>
    <property type="project" value="MGI"/>
</dbReference>
<dbReference type="GO" id="GO:0050852">
    <property type="term" value="P:T cell receptor signaling pathway"/>
    <property type="evidence" value="ECO:0000315"/>
    <property type="project" value="MGI"/>
</dbReference>
<dbReference type="GO" id="GO:0048538">
    <property type="term" value="P:thymus development"/>
    <property type="evidence" value="ECO:0000315"/>
    <property type="project" value="MGI"/>
</dbReference>
<dbReference type="GO" id="GO:0044319">
    <property type="term" value="P:wound healing, spreading of cells"/>
    <property type="evidence" value="ECO:0000250"/>
    <property type="project" value="UniProtKB"/>
</dbReference>
<dbReference type="FunFam" id="2.30.29.30:FF:000249">
    <property type="entry name" value="Capping protein regulator and myosin 1 linker 2"/>
    <property type="match status" value="1"/>
</dbReference>
<dbReference type="Gene3D" id="2.30.29.30">
    <property type="entry name" value="Pleckstrin-homology domain (PH domain)/Phosphotyrosine-binding domain (PTB)"/>
    <property type="match status" value="1"/>
</dbReference>
<dbReference type="Gene3D" id="3.80.10.10">
    <property type="entry name" value="Ribonuclease Inhibitor"/>
    <property type="match status" value="1"/>
</dbReference>
<dbReference type="InterPro" id="IPR031943">
    <property type="entry name" value="CARMIL_C"/>
</dbReference>
<dbReference type="InterPro" id="IPR041245">
    <property type="entry name" value="CARMIL_PH"/>
</dbReference>
<dbReference type="InterPro" id="IPR001611">
    <property type="entry name" value="Leu-rich_rpt"/>
</dbReference>
<dbReference type="InterPro" id="IPR032675">
    <property type="entry name" value="LRR_dom_sf"/>
</dbReference>
<dbReference type="InterPro" id="IPR011993">
    <property type="entry name" value="PH-like_dom_sf"/>
</dbReference>
<dbReference type="InterPro" id="IPR051279">
    <property type="entry name" value="PP1-Reg/Actin-Interact_Protein"/>
</dbReference>
<dbReference type="PANTHER" id="PTHR24112:SF32">
    <property type="entry name" value="CAPPING PROTEIN, ARP2_3 AND MYOSIN-I LINKER PROTEIN 2"/>
    <property type="match status" value="1"/>
</dbReference>
<dbReference type="PANTHER" id="PTHR24112">
    <property type="entry name" value="LEUCINE-RICH REPEAT, ISOFORM F-RELATED"/>
    <property type="match status" value="1"/>
</dbReference>
<dbReference type="Pfam" id="PF17888">
    <property type="entry name" value="Carm_PH"/>
    <property type="match status" value="1"/>
</dbReference>
<dbReference type="Pfam" id="PF16000">
    <property type="entry name" value="CARMIL_C"/>
    <property type="match status" value="2"/>
</dbReference>
<dbReference type="Pfam" id="PF13516">
    <property type="entry name" value="LRR_6"/>
    <property type="match status" value="2"/>
</dbReference>
<dbReference type="SMART" id="SM00368">
    <property type="entry name" value="LRR_RI"/>
    <property type="match status" value="4"/>
</dbReference>
<dbReference type="SUPFAM" id="SSF52047">
    <property type="entry name" value="RNI-like"/>
    <property type="match status" value="1"/>
</dbReference>
<evidence type="ECO:0000250" key="1">
    <source>
        <dbReference type="UniProtKB" id="Q6F5E8"/>
    </source>
</evidence>
<evidence type="ECO:0000256" key="2">
    <source>
        <dbReference type="SAM" id="MobiDB-lite"/>
    </source>
</evidence>
<evidence type="ECO:0000269" key="3">
    <source>
    </source>
</evidence>
<evidence type="ECO:0000303" key="4">
    <source>
    </source>
</evidence>
<evidence type="ECO:0000305" key="5"/>
<evidence type="ECO:0000312" key="6">
    <source>
        <dbReference type="MGI" id="MGI:2685431"/>
    </source>
</evidence>
<evidence type="ECO:0007744" key="7">
    <source>
    </source>
</evidence>
<evidence type="ECO:0007744" key="8">
    <source>
    </source>
</evidence>
<reference key="1">
    <citation type="journal article" date="2005" name="Science">
        <title>The transcriptional landscape of the mammalian genome.</title>
        <authorList>
            <person name="Carninci P."/>
            <person name="Kasukawa T."/>
            <person name="Katayama S."/>
            <person name="Gough J."/>
            <person name="Frith M.C."/>
            <person name="Maeda N."/>
            <person name="Oyama R."/>
            <person name="Ravasi T."/>
            <person name="Lenhard B."/>
            <person name="Wells C."/>
            <person name="Kodzius R."/>
            <person name="Shimokawa K."/>
            <person name="Bajic V.B."/>
            <person name="Brenner S.E."/>
            <person name="Batalov S."/>
            <person name="Forrest A.R."/>
            <person name="Zavolan M."/>
            <person name="Davis M.J."/>
            <person name="Wilming L.G."/>
            <person name="Aidinis V."/>
            <person name="Allen J.E."/>
            <person name="Ambesi-Impiombato A."/>
            <person name="Apweiler R."/>
            <person name="Aturaliya R.N."/>
            <person name="Bailey T.L."/>
            <person name="Bansal M."/>
            <person name="Baxter L."/>
            <person name="Beisel K.W."/>
            <person name="Bersano T."/>
            <person name="Bono H."/>
            <person name="Chalk A.M."/>
            <person name="Chiu K.P."/>
            <person name="Choudhary V."/>
            <person name="Christoffels A."/>
            <person name="Clutterbuck D.R."/>
            <person name="Crowe M.L."/>
            <person name="Dalla E."/>
            <person name="Dalrymple B.P."/>
            <person name="de Bono B."/>
            <person name="Della Gatta G."/>
            <person name="di Bernardo D."/>
            <person name="Down T."/>
            <person name="Engstrom P."/>
            <person name="Fagiolini M."/>
            <person name="Faulkner G."/>
            <person name="Fletcher C.F."/>
            <person name="Fukushima T."/>
            <person name="Furuno M."/>
            <person name="Futaki S."/>
            <person name="Gariboldi M."/>
            <person name="Georgii-Hemming P."/>
            <person name="Gingeras T.R."/>
            <person name="Gojobori T."/>
            <person name="Green R.E."/>
            <person name="Gustincich S."/>
            <person name="Harbers M."/>
            <person name="Hayashi Y."/>
            <person name="Hensch T.K."/>
            <person name="Hirokawa N."/>
            <person name="Hill D."/>
            <person name="Huminiecki L."/>
            <person name="Iacono M."/>
            <person name="Ikeo K."/>
            <person name="Iwama A."/>
            <person name="Ishikawa T."/>
            <person name="Jakt M."/>
            <person name="Kanapin A."/>
            <person name="Katoh M."/>
            <person name="Kawasawa Y."/>
            <person name="Kelso J."/>
            <person name="Kitamura H."/>
            <person name="Kitano H."/>
            <person name="Kollias G."/>
            <person name="Krishnan S.P."/>
            <person name="Kruger A."/>
            <person name="Kummerfeld S.K."/>
            <person name="Kurochkin I.V."/>
            <person name="Lareau L.F."/>
            <person name="Lazarevic D."/>
            <person name="Lipovich L."/>
            <person name="Liu J."/>
            <person name="Liuni S."/>
            <person name="McWilliam S."/>
            <person name="Madan Babu M."/>
            <person name="Madera M."/>
            <person name="Marchionni L."/>
            <person name="Matsuda H."/>
            <person name="Matsuzawa S."/>
            <person name="Miki H."/>
            <person name="Mignone F."/>
            <person name="Miyake S."/>
            <person name="Morris K."/>
            <person name="Mottagui-Tabar S."/>
            <person name="Mulder N."/>
            <person name="Nakano N."/>
            <person name="Nakauchi H."/>
            <person name="Ng P."/>
            <person name="Nilsson R."/>
            <person name="Nishiguchi S."/>
            <person name="Nishikawa S."/>
            <person name="Nori F."/>
            <person name="Ohara O."/>
            <person name="Okazaki Y."/>
            <person name="Orlando V."/>
            <person name="Pang K.C."/>
            <person name="Pavan W.J."/>
            <person name="Pavesi G."/>
            <person name="Pesole G."/>
            <person name="Petrovsky N."/>
            <person name="Piazza S."/>
            <person name="Reed J."/>
            <person name="Reid J.F."/>
            <person name="Ring B.Z."/>
            <person name="Ringwald M."/>
            <person name="Rost B."/>
            <person name="Ruan Y."/>
            <person name="Salzberg S.L."/>
            <person name="Sandelin A."/>
            <person name="Schneider C."/>
            <person name="Schoenbach C."/>
            <person name="Sekiguchi K."/>
            <person name="Semple C.A."/>
            <person name="Seno S."/>
            <person name="Sessa L."/>
            <person name="Sheng Y."/>
            <person name="Shibata Y."/>
            <person name="Shimada H."/>
            <person name="Shimada K."/>
            <person name="Silva D."/>
            <person name="Sinclair B."/>
            <person name="Sperling S."/>
            <person name="Stupka E."/>
            <person name="Sugiura K."/>
            <person name="Sultana R."/>
            <person name="Takenaka Y."/>
            <person name="Taki K."/>
            <person name="Tammoja K."/>
            <person name="Tan S.L."/>
            <person name="Tang S."/>
            <person name="Taylor M.S."/>
            <person name="Tegner J."/>
            <person name="Teichmann S.A."/>
            <person name="Ueda H.R."/>
            <person name="van Nimwegen E."/>
            <person name="Verardo R."/>
            <person name="Wei C.L."/>
            <person name="Yagi K."/>
            <person name="Yamanishi H."/>
            <person name="Zabarovsky E."/>
            <person name="Zhu S."/>
            <person name="Zimmer A."/>
            <person name="Hide W."/>
            <person name="Bult C."/>
            <person name="Grimmond S.M."/>
            <person name="Teasdale R.D."/>
            <person name="Liu E.T."/>
            <person name="Brusic V."/>
            <person name="Quackenbush J."/>
            <person name="Wahlestedt C."/>
            <person name="Mattick J.S."/>
            <person name="Hume D.A."/>
            <person name="Kai C."/>
            <person name="Sasaki D."/>
            <person name="Tomaru Y."/>
            <person name="Fukuda S."/>
            <person name="Kanamori-Katayama M."/>
            <person name="Suzuki M."/>
            <person name="Aoki J."/>
            <person name="Arakawa T."/>
            <person name="Iida J."/>
            <person name="Imamura K."/>
            <person name="Itoh M."/>
            <person name="Kato T."/>
            <person name="Kawaji H."/>
            <person name="Kawagashira N."/>
            <person name="Kawashima T."/>
            <person name="Kojima M."/>
            <person name="Kondo S."/>
            <person name="Konno H."/>
            <person name="Nakano K."/>
            <person name="Ninomiya N."/>
            <person name="Nishio T."/>
            <person name="Okada M."/>
            <person name="Plessy C."/>
            <person name="Shibata K."/>
            <person name="Shiraki T."/>
            <person name="Suzuki S."/>
            <person name="Tagami M."/>
            <person name="Waki K."/>
            <person name="Watahiki A."/>
            <person name="Okamura-Oho Y."/>
            <person name="Suzuki H."/>
            <person name="Kawai J."/>
            <person name="Hayashizaki Y."/>
        </authorList>
    </citation>
    <scope>NUCLEOTIDE SEQUENCE [LARGE SCALE MRNA] (ISOFORM 2)</scope>
    <source>
        <strain>C57BL/6J</strain>
        <tissue>Thymus</tissue>
    </source>
</reference>
<reference key="2">
    <citation type="journal article" date="2009" name="PLoS Biol.">
        <title>Lineage-specific biology revealed by a finished genome assembly of the mouse.</title>
        <authorList>
            <person name="Church D.M."/>
            <person name="Goodstadt L."/>
            <person name="Hillier L.W."/>
            <person name="Zody M.C."/>
            <person name="Goldstein S."/>
            <person name="She X."/>
            <person name="Bult C.J."/>
            <person name="Agarwala R."/>
            <person name="Cherry J.L."/>
            <person name="DiCuccio M."/>
            <person name="Hlavina W."/>
            <person name="Kapustin Y."/>
            <person name="Meric P."/>
            <person name="Maglott D."/>
            <person name="Birtle Z."/>
            <person name="Marques A.C."/>
            <person name="Graves T."/>
            <person name="Zhou S."/>
            <person name="Teague B."/>
            <person name="Potamousis K."/>
            <person name="Churas C."/>
            <person name="Place M."/>
            <person name="Herschleb J."/>
            <person name="Runnheim R."/>
            <person name="Forrest D."/>
            <person name="Amos-Landgraf J."/>
            <person name="Schwartz D.C."/>
            <person name="Cheng Z."/>
            <person name="Lindblad-Toh K."/>
            <person name="Eichler E.E."/>
            <person name="Ponting C.P."/>
        </authorList>
    </citation>
    <scope>NUCLEOTIDE SEQUENCE [LARGE SCALE GENOMIC DNA]</scope>
    <source>
        <strain>C57BL/6J</strain>
    </source>
</reference>
<reference key="3">
    <citation type="journal article" date="2010" name="Cell">
        <title>A tissue-specific atlas of mouse protein phosphorylation and expression.</title>
        <authorList>
            <person name="Huttlin E.L."/>
            <person name="Jedrychowski M.P."/>
            <person name="Elias J.E."/>
            <person name="Goswami T."/>
            <person name="Rad R."/>
            <person name="Beausoleil S.A."/>
            <person name="Villen J."/>
            <person name="Haas W."/>
            <person name="Sowa M.E."/>
            <person name="Gygi S.P."/>
        </authorList>
    </citation>
    <scope>PHOSPHORYLATION [LARGE SCALE ANALYSIS] AT SER-1008; SER-1134; THR-1145; SER-1203 AND SER-1281</scope>
    <scope>IDENTIFICATION BY MASS SPECTROMETRY [LARGE SCALE ANALYSIS]</scope>
    <source>
        <tissue>Brain</tissue>
        <tissue>Lung</tissue>
        <tissue>Spleen</tissue>
    </source>
</reference>
<reference key="4">
    <citation type="journal article" date="2014" name="Mol. Cell. Proteomics">
        <title>Immunoaffinity enrichment and mass spectrometry analysis of protein methylation.</title>
        <authorList>
            <person name="Guo A."/>
            <person name="Gu H."/>
            <person name="Zhou J."/>
            <person name="Mulhern D."/>
            <person name="Wang Y."/>
            <person name="Lee K.A."/>
            <person name="Yang V."/>
            <person name="Aguiar M."/>
            <person name="Kornhauser J."/>
            <person name="Jia X."/>
            <person name="Ren J."/>
            <person name="Beausoleil S.A."/>
            <person name="Silva J.C."/>
            <person name="Vemulapalli V."/>
            <person name="Bedford M.T."/>
            <person name="Comb M.J."/>
        </authorList>
    </citation>
    <scope>METHYLATION [LARGE SCALE ANALYSIS] AT ARG-1191</scope>
    <scope>IDENTIFICATION BY MASS SPECTROMETRY [LARGE SCALE ANALYSIS]</scope>
    <source>
        <tissue>Brain</tissue>
    </source>
</reference>
<reference key="5">
    <citation type="journal article" date="2016" name="J. Exp. Med.">
        <title>The scaffolding function of the RLTPR protein explains its essential role for CD28 co-stimulation in mouse and human T cells.</title>
        <authorList>
            <person name="Roncagalli R."/>
            <person name="Cucchetti M."/>
            <person name="Jarmuzynski N."/>
            <person name="Gregoire C."/>
            <person name="Bergot E."/>
            <person name="Audebert S."/>
            <person name="Baudelet E."/>
            <person name="Menoita M.G."/>
            <person name="Joachim A."/>
            <person name="Durand S."/>
            <person name="Suchanek M."/>
            <person name="Fiore F."/>
            <person name="Zhang L."/>
            <person name="Liang Y."/>
            <person name="Camoin L."/>
            <person name="Malissen M."/>
            <person name="Malissen B."/>
        </authorList>
    </citation>
    <scope>FUNCTION</scope>
</reference>
<organism>
    <name type="scientific">Mus musculus</name>
    <name type="common">Mouse</name>
    <dbReference type="NCBI Taxonomy" id="10090"/>
    <lineage>
        <taxon>Eukaryota</taxon>
        <taxon>Metazoa</taxon>
        <taxon>Chordata</taxon>
        <taxon>Craniata</taxon>
        <taxon>Vertebrata</taxon>
        <taxon>Euteleostomi</taxon>
        <taxon>Mammalia</taxon>
        <taxon>Eutheria</taxon>
        <taxon>Euarchontoglires</taxon>
        <taxon>Glires</taxon>
        <taxon>Rodentia</taxon>
        <taxon>Myomorpha</taxon>
        <taxon>Muroidea</taxon>
        <taxon>Muridae</taxon>
        <taxon>Murinae</taxon>
        <taxon>Mus</taxon>
        <taxon>Mus</taxon>
    </lineage>
</organism>
<keyword id="KW-0025">Alternative splicing</keyword>
<keyword id="KW-1003">Cell membrane</keyword>
<keyword id="KW-0966">Cell projection</keyword>
<keyword id="KW-0963">Cytoplasm</keyword>
<keyword id="KW-0206">Cytoskeleton</keyword>
<keyword id="KW-0433">Leucine-rich repeat</keyword>
<keyword id="KW-0472">Membrane</keyword>
<keyword id="KW-0488">Methylation</keyword>
<keyword id="KW-0597">Phosphoprotein</keyword>
<keyword id="KW-1185">Reference proteome</keyword>
<keyword id="KW-0677">Repeat</keyword>
<accession>Q3V3V9</accession>
<proteinExistence type="evidence at protein level"/>
<gene>
    <name evidence="6" type="primary">Carmil2</name>
    <name type="synonym">Lrrc16c</name>
    <name evidence="6" type="synonym">Rltpr</name>
</gene>
<protein>
    <recommendedName>
        <fullName evidence="1">Capping protein, Arp2/3 and myosin-I linker protein 2</fullName>
    </recommendedName>
    <alternativeName>
        <fullName evidence="6">Capping protein regulator and myosin 1 linker 2</fullName>
    </alternativeName>
    <alternativeName>
        <fullName evidence="5">F-actin-uncapping protein RLTPR</fullName>
    </alternativeName>
    <alternativeName>
        <fullName>Leucine-rich repeat-containing protein 16C</fullName>
    </alternativeName>
    <alternativeName>
        <fullName evidence="1 6">RGD, leucine-rich repeat, tropomodulin and proline-rich-containing protein</fullName>
    </alternativeName>
</protein>